<sequence length="1373" mass="158828">MQGNTCHRMSYHPGRGCPRGRGGHGARPSAPAFRPQNLRLLHPQQPPAQYQYEPPSAPSSSYSNSQAPSFMPPRPDFVPYPPPAAPSAQGPLPPCPVRPPYPNHQMRHPFPVPPCFPPMPPPMPCPNNPPASGAPPGQGTFPFMVPPPSMPHPPPPPVMPQQVNYQYPPGYSHSFPPPGFNSYQNNSSSFPPSANSSSTPHFRHLPPYSLPKAQNERRSPERLKHYDDHRHRDHSHGRGERHRSLERRERGRSPERRRPESRYRSDYDRGRTPPPRHRSYERSRERDRERHRHREARRSPSLERSYKKEYKRSGRSYALPVAPEPAGCTPELPGEMIKTTESWAPPPENVNHRSPSREKKRARWEEEKDRWSDSQGSGKEKNYTSIKEKEAEEVPPEKTEEEEEELLKPVWIRCTHSESYYSSDPMDQVGDSTVVGTSRLRDLYDKFEEELGNRQEKAKAARPPWEPPKTKLDEDLESSSESECETDDDSTCSSSSDSEVFDVIAEIKRKKAHPDRLHDELWYNDPGQMNDGPLCKCSAKARRTGIRHSIYPGEEAIKPCRPMTNNAGRLFHYRITVSPPTNFLTDRPTVIEYDDHEYIFEGFSMFAHAPLTNIPLCKVIRFNIDYTIHFIEEMMPENFCVKGLELFSLFLFRDILELYDWNLKGPLFEDSPPCCPRFHFMPRFVRFLPDGGKEVLSMHQILLYLLRCSKALVPEEEIANMLQWEELEWQKYAEECKGMIVTNPGTKPSSVRIDQLDREQFNPEVITFPIIVHFGIRPAQLSYAGDPQYQKLWKSYVKLRHLLANSPKVKQTDKQKLAQREEALQKIRQKNTMRREVTVELSSQGFWKTGIRSDVCQHAMMLPVLTHHIRYHQCLMHLDKLIGYTFQDRCLLQLAMTHPSHHLNFGMNPDHARNSLSNCGIRQPKYGDRKVHHMHMRKKGINTLINIMSRLGQDDPTPSRINHNERLEFLGDAVVEFLTSVHLYYLFPSLEEGGLATYRTAIVQNQHLAMLAKKLELDRFMLYAHGPDLCRESDLRHAMANCFEALIGAVYLEGSLEEAKQLFGRLLFNDPDLREVWLNYPLHPLQLQEPNTDRQLIETSPVLQKLTEFEEAIGVIFTHVRLLARAFTLRTVGFNHLTLGHNQRMEFLGDSIMQLVATEYLFIHFPDHHEGHLTLLRSSLVNNRTQAKVAEELGMQEYAITNDKTKRPVALRTKTLADLLESFIAALYIDKDLEYVHTFMNVCFFPRLKEFILNQDWNDPKSQLQQCCLTLRTEGKEPDIPLYKTLQTVGPSHARTYTVAVYFKGERIGCGKGPSIQQAEMGAAMDALEKYNFPQMAHQKRFIERKYRQELKEMRWEREHQEREPEEAEDIKK</sequence>
<organism>
    <name type="scientific">Mus musculus</name>
    <name type="common">Mouse</name>
    <dbReference type="NCBI Taxonomy" id="10090"/>
    <lineage>
        <taxon>Eukaryota</taxon>
        <taxon>Metazoa</taxon>
        <taxon>Chordata</taxon>
        <taxon>Craniata</taxon>
        <taxon>Vertebrata</taxon>
        <taxon>Euteleostomi</taxon>
        <taxon>Mammalia</taxon>
        <taxon>Eutheria</taxon>
        <taxon>Euarchontoglires</taxon>
        <taxon>Glires</taxon>
        <taxon>Rodentia</taxon>
        <taxon>Myomorpha</taxon>
        <taxon>Muroidea</taxon>
        <taxon>Muridae</taxon>
        <taxon>Murinae</taxon>
        <taxon>Mus</taxon>
        <taxon>Mus</taxon>
    </lineage>
</organism>
<feature type="chain" id="PRO_0000384374" description="Ribonuclease 3">
    <location>
        <begin position="1"/>
        <end position="1373"/>
    </location>
</feature>
<feature type="domain" description="RNase III 1">
    <location>
        <begin position="875"/>
        <end position="1055"/>
    </location>
</feature>
<feature type="domain" description="RNase III 2">
    <location>
        <begin position="1106"/>
        <end position="1232"/>
    </location>
</feature>
<feature type="domain" description="DRBM">
    <location>
        <begin position="1259"/>
        <end position="1333"/>
    </location>
</feature>
<feature type="region of interest" description="Disordered" evidence="4">
    <location>
        <begin position="1"/>
        <end position="99"/>
    </location>
</feature>
<feature type="region of interest" description="Disordered" evidence="4">
    <location>
        <begin position="119"/>
        <end position="406"/>
    </location>
</feature>
<feature type="region of interest" description="Necessary for interaction with DGCR8 and pri-miRNA processing activity" evidence="3">
    <location>
        <begin position="389"/>
        <end position="1364"/>
    </location>
</feature>
<feature type="region of interest" description="Disordered" evidence="4">
    <location>
        <begin position="447"/>
        <end position="496"/>
    </location>
</feature>
<feature type="compositionally biased region" description="Low complexity" evidence="4">
    <location>
        <begin position="47"/>
        <end position="69"/>
    </location>
</feature>
<feature type="compositionally biased region" description="Pro residues" evidence="4">
    <location>
        <begin position="70"/>
        <end position="99"/>
    </location>
</feature>
<feature type="compositionally biased region" description="Pro residues" evidence="4">
    <location>
        <begin position="119"/>
        <end position="133"/>
    </location>
</feature>
<feature type="compositionally biased region" description="Pro residues" evidence="4">
    <location>
        <begin position="144"/>
        <end position="159"/>
    </location>
</feature>
<feature type="compositionally biased region" description="Low complexity" evidence="4">
    <location>
        <begin position="160"/>
        <end position="169"/>
    </location>
</feature>
<feature type="compositionally biased region" description="Low complexity" evidence="4">
    <location>
        <begin position="185"/>
        <end position="200"/>
    </location>
</feature>
<feature type="compositionally biased region" description="Basic and acidic residues" evidence="4">
    <location>
        <begin position="214"/>
        <end position="271"/>
    </location>
</feature>
<feature type="compositionally biased region" description="Basic and acidic residues" evidence="4">
    <location>
        <begin position="278"/>
        <end position="288"/>
    </location>
</feature>
<feature type="compositionally biased region" description="Basic and acidic residues" evidence="4">
    <location>
        <begin position="297"/>
        <end position="312"/>
    </location>
</feature>
<feature type="compositionally biased region" description="Basic and acidic residues" evidence="4">
    <location>
        <begin position="363"/>
        <end position="398"/>
    </location>
</feature>
<feature type="compositionally biased region" description="Basic and acidic residues" evidence="4">
    <location>
        <begin position="447"/>
        <end position="459"/>
    </location>
</feature>
<feature type="compositionally biased region" description="Acidic residues" evidence="4">
    <location>
        <begin position="474"/>
        <end position="490"/>
    </location>
</feature>
<feature type="binding site" evidence="3">
    <location>
        <position position="535"/>
    </location>
    <ligand>
        <name>Zn(2+)</name>
        <dbReference type="ChEBI" id="CHEBI:29105"/>
        <label>1</label>
    </ligand>
</feature>
<feature type="binding site" evidence="3">
    <location>
        <position position="537"/>
    </location>
    <ligand>
        <name>Zn(2+)</name>
        <dbReference type="ChEBI" id="CHEBI:29105"/>
        <label>1</label>
    </ligand>
</feature>
<feature type="binding site" evidence="3">
    <location>
        <position position="548"/>
    </location>
    <ligand>
        <name>Zn(2+)</name>
        <dbReference type="ChEBI" id="CHEBI:29105"/>
        <label>1</label>
    </ligand>
</feature>
<feature type="binding site" evidence="3">
    <location>
        <position position="560"/>
    </location>
    <ligand>
        <name>Zn(2+)</name>
        <dbReference type="ChEBI" id="CHEBI:29105"/>
        <label>2</label>
    </ligand>
</feature>
<feature type="binding site" evidence="3">
    <location>
        <position position="608"/>
    </location>
    <ligand>
        <name>Zn(2+)</name>
        <dbReference type="ChEBI" id="CHEBI:29105"/>
        <label>2</label>
    </ligand>
</feature>
<feature type="binding site" evidence="3">
    <location>
        <position position="675"/>
    </location>
    <ligand>
        <name>Zn(2+)</name>
        <dbReference type="ChEBI" id="CHEBI:29105"/>
        <label>2</label>
    </ligand>
</feature>
<feature type="binding site" evidence="3">
    <location>
        <position position="679"/>
    </location>
    <ligand>
        <name>Zn(2+)</name>
        <dbReference type="ChEBI" id="CHEBI:29105"/>
        <label>2</label>
    </ligand>
</feature>
<feature type="binding site" evidence="2">
    <location>
        <position position="968"/>
    </location>
    <ligand>
        <name>Mg(2+)</name>
        <dbReference type="ChEBI" id="CHEBI:18420"/>
        <label>1</label>
    </ligand>
</feature>
<feature type="binding site" evidence="3">
    <location>
        <position position="1025"/>
    </location>
    <ligand>
        <name>Zn(2+)</name>
        <dbReference type="ChEBI" id="CHEBI:29105"/>
        <label>1</label>
    </ligand>
</feature>
<feature type="binding site" evidence="2">
    <location>
        <position position="1041"/>
    </location>
    <ligand>
        <name>Mg(2+)</name>
        <dbReference type="ChEBI" id="CHEBI:18420"/>
        <label>1</label>
    </ligand>
</feature>
<feature type="binding site" evidence="2">
    <location>
        <position position="1044"/>
    </location>
    <ligand>
        <name>Mg(2+)</name>
        <dbReference type="ChEBI" id="CHEBI:18420"/>
        <label>1</label>
    </ligand>
</feature>
<feature type="binding site" evidence="2">
    <location>
        <position position="1146"/>
    </location>
    <ligand>
        <name>Mg(2+)</name>
        <dbReference type="ChEBI" id="CHEBI:18420"/>
        <label>2</label>
    </ligand>
</feature>
<feature type="binding site" evidence="2">
    <location>
        <position position="1218"/>
    </location>
    <ligand>
        <name>Mg(2+)</name>
        <dbReference type="ChEBI" id="CHEBI:18420"/>
        <label>2</label>
    </ligand>
</feature>
<feature type="binding site" evidence="2">
    <location>
        <position position="1221"/>
    </location>
    <ligand>
        <name>Mg(2+)</name>
        <dbReference type="ChEBI" id="CHEBI:18420"/>
        <label>2</label>
    </ligand>
</feature>
<feature type="site" description="Important for activity" evidence="1">
    <location>
        <position position="1214"/>
    </location>
</feature>
<feature type="modified residue" description="Phosphoserine" evidence="3">
    <location>
        <position position="354"/>
    </location>
</feature>
<feature type="modified residue" description="Phosphoserine" evidence="3">
    <location>
        <position position="372"/>
    </location>
</feature>
<reference key="1">
    <citation type="journal article" date="2005" name="Science">
        <title>The transcriptional landscape of the mammalian genome.</title>
        <authorList>
            <person name="Carninci P."/>
            <person name="Kasukawa T."/>
            <person name="Katayama S."/>
            <person name="Gough J."/>
            <person name="Frith M.C."/>
            <person name="Maeda N."/>
            <person name="Oyama R."/>
            <person name="Ravasi T."/>
            <person name="Lenhard B."/>
            <person name="Wells C."/>
            <person name="Kodzius R."/>
            <person name="Shimokawa K."/>
            <person name="Bajic V.B."/>
            <person name="Brenner S.E."/>
            <person name="Batalov S."/>
            <person name="Forrest A.R."/>
            <person name="Zavolan M."/>
            <person name="Davis M.J."/>
            <person name="Wilming L.G."/>
            <person name="Aidinis V."/>
            <person name="Allen J.E."/>
            <person name="Ambesi-Impiombato A."/>
            <person name="Apweiler R."/>
            <person name="Aturaliya R.N."/>
            <person name="Bailey T.L."/>
            <person name="Bansal M."/>
            <person name="Baxter L."/>
            <person name="Beisel K.W."/>
            <person name="Bersano T."/>
            <person name="Bono H."/>
            <person name="Chalk A.M."/>
            <person name="Chiu K.P."/>
            <person name="Choudhary V."/>
            <person name="Christoffels A."/>
            <person name="Clutterbuck D.R."/>
            <person name="Crowe M.L."/>
            <person name="Dalla E."/>
            <person name="Dalrymple B.P."/>
            <person name="de Bono B."/>
            <person name="Della Gatta G."/>
            <person name="di Bernardo D."/>
            <person name="Down T."/>
            <person name="Engstrom P."/>
            <person name="Fagiolini M."/>
            <person name="Faulkner G."/>
            <person name="Fletcher C.F."/>
            <person name="Fukushima T."/>
            <person name="Furuno M."/>
            <person name="Futaki S."/>
            <person name="Gariboldi M."/>
            <person name="Georgii-Hemming P."/>
            <person name="Gingeras T.R."/>
            <person name="Gojobori T."/>
            <person name="Green R.E."/>
            <person name="Gustincich S."/>
            <person name="Harbers M."/>
            <person name="Hayashi Y."/>
            <person name="Hensch T.K."/>
            <person name="Hirokawa N."/>
            <person name="Hill D."/>
            <person name="Huminiecki L."/>
            <person name="Iacono M."/>
            <person name="Ikeo K."/>
            <person name="Iwama A."/>
            <person name="Ishikawa T."/>
            <person name="Jakt M."/>
            <person name="Kanapin A."/>
            <person name="Katoh M."/>
            <person name="Kawasawa Y."/>
            <person name="Kelso J."/>
            <person name="Kitamura H."/>
            <person name="Kitano H."/>
            <person name="Kollias G."/>
            <person name="Krishnan S.P."/>
            <person name="Kruger A."/>
            <person name="Kummerfeld S.K."/>
            <person name="Kurochkin I.V."/>
            <person name="Lareau L.F."/>
            <person name="Lazarevic D."/>
            <person name="Lipovich L."/>
            <person name="Liu J."/>
            <person name="Liuni S."/>
            <person name="McWilliam S."/>
            <person name="Madan Babu M."/>
            <person name="Madera M."/>
            <person name="Marchionni L."/>
            <person name="Matsuda H."/>
            <person name="Matsuzawa S."/>
            <person name="Miki H."/>
            <person name="Mignone F."/>
            <person name="Miyake S."/>
            <person name="Morris K."/>
            <person name="Mottagui-Tabar S."/>
            <person name="Mulder N."/>
            <person name="Nakano N."/>
            <person name="Nakauchi H."/>
            <person name="Ng P."/>
            <person name="Nilsson R."/>
            <person name="Nishiguchi S."/>
            <person name="Nishikawa S."/>
            <person name="Nori F."/>
            <person name="Ohara O."/>
            <person name="Okazaki Y."/>
            <person name="Orlando V."/>
            <person name="Pang K.C."/>
            <person name="Pavan W.J."/>
            <person name="Pavesi G."/>
            <person name="Pesole G."/>
            <person name="Petrovsky N."/>
            <person name="Piazza S."/>
            <person name="Reed J."/>
            <person name="Reid J.F."/>
            <person name="Ring B.Z."/>
            <person name="Ringwald M."/>
            <person name="Rost B."/>
            <person name="Ruan Y."/>
            <person name="Salzberg S.L."/>
            <person name="Sandelin A."/>
            <person name="Schneider C."/>
            <person name="Schoenbach C."/>
            <person name="Sekiguchi K."/>
            <person name="Semple C.A."/>
            <person name="Seno S."/>
            <person name="Sessa L."/>
            <person name="Sheng Y."/>
            <person name="Shibata Y."/>
            <person name="Shimada H."/>
            <person name="Shimada K."/>
            <person name="Silva D."/>
            <person name="Sinclair B."/>
            <person name="Sperling S."/>
            <person name="Stupka E."/>
            <person name="Sugiura K."/>
            <person name="Sultana R."/>
            <person name="Takenaka Y."/>
            <person name="Taki K."/>
            <person name="Tammoja K."/>
            <person name="Tan S.L."/>
            <person name="Tang S."/>
            <person name="Taylor M.S."/>
            <person name="Tegner J."/>
            <person name="Teichmann S.A."/>
            <person name="Ueda H.R."/>
            <person name="van Nimwegen E."/>
            <person name="Verardo R."/>
            <person name="Wei C.L."/>
            <person name="Yagi K."/>
            <person name="Yamanishi H."/>
            <person name="Zabarovsky E."/>
            <person name="Zhu S."/>
            <person name="Zimmer A."/>
            <person name="Hide W."/>
            <person name="Bult C."/>
            <person name="Grimmond S.M."/>
            <person name="Teasdale R.D."/>
            <person name="Liu E.T."/>
            <person name="Brusic V."/>
            <person name="Quackenbush J."/>
            <person name="Wahlestedt C."/>
            <person name="Mattick J.S."/>
            <person name="Hume D.A."/>
            <person name="Kai C."/>
            <person name="Sasaki D."/>
            <person name="Tomaru Y."/>
            <person name="Fukuda S."/>
            <person name="Kanamori-Katayama M."/>
            <person name="Suzuki M."/>
            <person name="Aoki J."/>
            <person name="Arakawa T."/>
            <person name="Iida J."/>
            <person name="Imamura K."/>
            <person name="Itoh M."/>
            <person name="Kato T."/>
            <person name="Kawaji H."/>
            <person name="Kawagashira N."/>
            <person name="Kawashima T."/>
            <person name="Kojima M."/>
            <person name="Kondo S."/>
            <person name="Konno H."/>
            <person name="Nakano K."/>
            <person name="Ninomiya N."/>
            <person name="Nishio T."/>
            <person name="Okada M."/>
            <person name="Plessy C."/>
            <person name="Shibata K."/>
            <person name="Shiraki T."/>
            <person name="Suzuki S."/>
            <person name="Tagami M."/>
            <person name="Waki K."/>
            <person name="Watahiki A."/>
            <person name="Okamura-Oho Y."/>
            <person name="Suzuki H."/>
            <person name="Kawai J."/>
            <person name="Hayashizaki Y."/>
        </authorList>
    </citation>
    <scope>NUCLEOTIDE SEQUENCE [LARGE SCALE MRNA]</scope>
    <source>
        <strain>C57BL/6J</strain>
        <tissue>Embryonic stem cell</tissue>
        <tissue>Sympathetic ganglion</tissue>
    </source>
</reference>
<reference key="2">
    <citation type="journal article" date="2004" name="Genome Res.">
        <title>The status, quality, and expansion of the NIH full-length cDNA project: the Mammalian Gene Collection (MGC).</title>
        <authorList>
            <consortium name="The MGC Project Team"/>
        </authorList>
    </citation>
    <scope>NUCLEOTIDE SEQUENCE [LARGE SCALE MRNA]</scope>
    <source>
        <strain>C57BL/6J</strain>
        <tissue>Embryonic brain</tissue>
    </source>
</reference>
<reference key="3">
    <citation type="journal article" date="2009" name="Cell">
        <title>Ars2 links the nuclear cap-binding complex to RNA interference and cell proliferation.</title>
        <authorList>
            <person name="Gruber J.J."/>
            <person name="Zatechka D.S."/>
            <person name="Sabin L.R."/>
            <person name="Yong J."/>
            <person name="Lum J.J."/>
            <person name="Kong M."/>
            <person name="Zong W.-X."/>
            <person name="Zhang Z."/>
            <person name="Lau C.-K."/>
            <person name="Rawlings J."/>
            <person name="Cherry S."/>
            <person name="Ihle J.N."/>
            <person name="Dreyfuss G."/>
            <person name="Thompson C.B."/>
        </authorList>
    </citation>
    <scope>INTERACTION WITH SRRT</scope>
</reference>
<reference key="4">
    <citation type="journal article" date="2015" name="Cell">
        <title>A biogenesis step upstream of microprocessor controls miR-17~92 expression.</title>
        <authorList>
            <person name="Du P."/>
            <person name="Wang L."/>
            <person name="Sliz P."/>
            <person name="Gregory R.I."/>
        </authorList>
    </citation>
    <scope>FUNCTION</scope>
    <scope>INTERACTION WITH CPSF3; DGCR8 AND ISY1</scope>
</reference>
<reference key="5">
    <citation type="journal article" date="2018" name="Sci. Rep.">
        <title>Neuronal activity regulates DROSHA via autophagy in spinal muscular atrophy.</title>
        <authorList>
            <person name="Goncalves I.D.C.G."/>
            <person name="Brecht J."/>
            <person name="Thelen M.P."/>
            <person name="Rehorst W.A."/>
            <person name="Peters M."/>
            <person name="Lee H.J."/>
            <person name="Motameny S."/>
            <person name="Torres-Benito L."/>
            <person name="Ebrahimi-Fakhari D."/>
            <person name="Kononenko N.L."/>
            <person name="Altmueller J."/>
            <person name="Vilchez D."/>
            <person name="Sahin M."/>
            <person name="Wirth B."/>
            <person name="Kye M.J."/>
        </authorList>
    </citation>
    <scope>FUNCTION</scope>
    <scope>SUBCELLULAR LOCATION</scope>
    <scope>TISSUE SPECIFICITY</scope>
    <scope>DEGRADED BY AUTOPHAGY</scope>
</reference>
<protein>
    <recommendedName>
        <fullName>Ribonuclease 3</fullName>
        <ecNumber evidence="3">3.1.26.3</ecNumber>
    </recommendedName>
    <alternativeName>
        <fullName>Protein Drosha</fullName>
    </alternativeName>
    <alternativeName>
        <fullName>Ribonuclease III</fullName>
        <shortName>RNase III</shortName>
    </alternativeName>
</protein>
<name>RNC_MOUSE</name>
<evidence type="ECO:0000250" key="1"/>
<evidence type="ECO:0000250" key="2">
    <source>
        <dbReference type="UniProtKB" id="O67082"/>
    </source>
</evidence>
<evidence type="ECO:0000250" key="3">
    <source>
        <dbReference type="UniProtKB" id="Q9NRR4"/>
    </source>
</evidence>
<evidence type="ECO:0000256" key="4">
    <source>
        <dbReference type="SAM" id="MobiDB-lite"/>
    </source>
</evidence>
<evidence type="ECO:0000269" key="5">
    <source>
    </source>
</evidence>
<evidence type="ECO:0000269" key="6">
    <source>
    </source>
</evidence>
<evidence type="ECO:0000269" key="7">
    <source>
    </source>
</evidence>
<evidence type="ECO:0000305" key="8"/>
<dbReference type="EC" id="3.1.26.3" evidence="3"/>
<dbReference type="EMBL" id="AK144147">
    <property type="protein sequence ID" value="BAE25729.1"/>
    <property type="molecule type" value="mRNA"/>
</dbReference>
<dbReference type="EMBL" id="AK148640">
    <property type="protein sequence ID" value="BAE28629.1"/>
    <property type="molecule type" value="mRNA"/>
</dbReference>
<dbReference type="EMBL" id="BC088999">
    <property type="protein sequence ID" value="AAH88999.1"/>
    <property type="molecule type" value="mRNA"/>
</dbReference>
<dbReference type="CCDS" id="CCDS49583.1"/>
<dbReference type="RefSeq" id="NP_001123621.1">
    <property type="nucleotide sequence ID" value="NM_001130149.1"/>
</dbReference>
<dbReference type="RefSeq" id="NP_081075.3">
    <property type="nucleotide sequence ID" value="NM_026799.3"/>
</dbReference>
<dbReference type="BMRB" id="Q5HZJ0"/>
<dbReference type="SMR" id="Q5HZJ0"/>
<dbReference type="BioGRID" id="199531">
    <property type="interactions" value="14"/>
</dbReference>
<dbReference type="ComplexPortal" id="CPX-3081">
    <property type="entry name" value="Microprocessor complex"/>
</dbReference>
<dbReference type="CORUM" id="Q5HZJ0"/>
<dbReference type="FunCoup" id="Q5HZJ0">
    <property type="interactions" value="4304"/>
</dbReference>
<dbReference type="IntAct" id="Q5HZJ0">
    <property type="interactions" value="2"/>
</dbReference>
<dbReference type="STRING" id="10090.ENSMUSP00000129279"/>
<dbReference type="GlyGen" id="Q5HZJ0">
    <property type="glycosylation" value="1 site"/>
</dbReference>
<dbReference type="iPTMnet" id="Q5HZJ0"/>
<dbReference type="PhosphoSitePlus" id="Q5HZJ0"/>
<dbReference type="jPOST" id="Q5HZJ0"/>
<dbReference type="PaxDb" id="10090-ENSMUSP00000129279"/>
<dbReference type="PeptideAtlas" id="Q5HZJ0"/>
<dbReference type="ProteomicsDB" id="299851"/>
<dbReference type="Pumba" id="Q5HZJ0"/>
<dbReference type="Antibodypedia" id="22652">
    <property type="antibodies" value="292 antibodies from 36 providers"/>
</dbReference>
<dbReference type="DNASU" id="14000"/>
<dbReference type="Ensembl" id="ENSMUST00000090292.13">
    <property type="protein sequence ID" value="ENSMUSP00000087762.6"/>
    <property type="gene ID" value="ENSMUSG00000022191.17"/>
</dbReference>
<dbReference type="Ensembl" id="ENSMUST00000169061.8">
    <property type="protein sequence ID" value="ENSMUSP00000129279.2"/>
    <property type="gene ID" value="ENSMUSG00000022191.17"/>
</dbReference>
<dbReference type="GeneID" id="14000"/>
<dbReference type="KEGG" id="mmu:14000"/>
<dbReference type="UCSC" id="uc007via.2">
    <property type="organism name" value="mouse"/>
</dbReference>
<dbReference type="AGR" id="MGI:1261425"/>
<dbReference type="CTD" id="29102"/>
<dbReference type="MGI" id="MGI:1261425">
    <property type="gene designation" value="Drosha"/>
</dbReference>
<dbReference type="VEuPathDB" id="HostDB:ENSMUSG00000022191"/>
<dbReference type="eggNOG" id="KOG1817">
    <property type="taxonomic scope" value="Eukaryota"/>
</dbReference>
<dbReference type="GeneTree" id="ENSGT00730000111052"/>
<dbReference type="InParanoid" id="Q5HZJ0"/>
<dbReference type="OMA" id="ENFTIHE"/>
<dbReference type="OrthoDB" id="67027at2759"/>
<dbReference type="PhylomeDB" id="Q5HZJ0"/>
<dbReference type="TreeFam" id="TF314734"/>
<dbReference type="BioGRID-ORCS" id="14000">
    <property type="hits" value="7 hits in 79 CRISPR screens"/>
</dbReference>
<dbReference type="ChiTaRS" id="Drosha">
    <property type="organism name" value="mouse"/>
</dbReference>
<dbReference type="PRO" id="PR:Q5HZJ0"/>
<dbReference type="Proteomes" id="UP000000589">
    <property type="component" value="Chromosome 15"/>
</dbReference>
<dbReference type="RNAct" id="Q5HZJ0">
    <property type="molecule type" value="protein"/>
</dbReference>
<dbReference type="Bgee" id="ENSMUSG00000022191">
    <property type="expression patterns" value="Expressed in floor plate of midbrain and 229 other cell types or tissues"/>
</dbReference>
<dbReference type="GO" id="GO:0005829">
    <property type="term" value="C:cytosol"/>
    <property type="evidence" value="ECO:0007669"/>
    <property type="project" value="Ensembl"/>
</dbReference>
<dbReference type="GO" id="GO:0098978">
    <property type="term" value="C:glutamatergic synapse"/>
    <property type="evidence" value="ECO:0000314"/>
    <property type="project" value="SynGO"/>
</dbReference>
<dbReference type="GO" id="GO:0070877">
    <property type="term" value="C:microprocessor complex"/>
    <property type="evidence" value="ECO:0000266"/>
    <property type="project" value="ComplexPortal"/>
</dbReference>
<dbReference type="GO" id="GO:0005730">
    <property type="term" value="C:nucleolus"/>
    <property type="evidence" value="ECO:0007669"/>
    <property type="project" value="UniProtKB-SubCell"/>
</dbReference>
<dbReference type="GO" id="GO:0005654">
    <property type="term" value="C:nucleoplasm"/>
    <property type="evidence" value="ECO:0007669"/>
    <property type="project" value="Ensembl"/>
</dbReference>
<dbReference type="GO" id="GO:0014069">
    <property type="term" value="C:postsynaptic density"/>
    <property type="evidence" value="ECO:0000314"/>
    <property type="project" value="MGI"/>
</dbReference>
<dbReference type="GO" id="GO:0017151">
    <property type="term" value="F:DEAD/H-box RNA helicase binding"/>
    <property type="evidence" value="ECO:0007669"/>
    <property type="project" value="Ensembl"/>
</dbReference>
<dbReference type="GO" id="GO:0001530">
    <property type="term" value="F:lipopolysaccharide binding"/>
    <property type="evidence" value="ECO:0007669"/>
    <property type="project" value="Ensembl"/>
</dbReference>
<dbReference type="GO" id="GO:0046872">
    <property type="term" value="F:metal ion binding"/>
    <property type="evidence" value="ECO:0007669"/>
    <property type="project" value="UniProtKB-KW"/>
</dbReference>
<dbReference type="GO" id="GO:0070878">
    <property type="term" value="F:primary miRNA binding"/>
    <property type="evidence" value="ECO:0000314"/>
    <property type="project" value="MGI"/>
</dbReference>
<dbReference type="GO" id="GO:0042803">
    <property type="term" value="F:protein homodimerization activity"/>
    <property type="evidence" value="ECO:0007669"/>
    <property type="project" value="Ensembl"/>
</dbReference>
<dbReference type="GO" id="GO:0070412">
    <property type="term" value="F:R-SMAD binding"/>
    <property type="evidence" value="ECO:0007669"/>
    <property type="project" value="Ensembl"/>
</dbReference>
<dbReference type="GO" id="GO:0004525">
    <property type="term" value="F:ribonuclease III activity"/>
    <property type="evidence" value="ECO:0007669"/>
    <property type="project" value="UniProtKB-EC"/>
</dbReference>
<dbReference type="GO" id="GO:0004521">
    <property type="term" value="F:RNA endonuclease activity"/>
    <property type="evidence" value="ECO:0000314"/>
    <property type="project" value="MGI"/>
</dbReference>
<dbReference type="GO" id="GO:0050829">
    <property type="term" value="P:defense response to Gram-negative bacterium"/>
    <property type="evidence" value="ECO:0007669"/>
    <property type="project" value="Ensembl"/>
</dbReference>
<dbReference type="GO" id="GO:0050830">
    <property type="term" value="P:defense response to Gram-positive bacterium"/>
    <property type="evidence" value="ECO:0007669"/>
    <property type="project" value="Ensembl"/>
</dbReference>
<dbReference type="GO" id="GO:0010586">
    <property type="term" value="P:miRNA metabolic process"/>
    <property type="evidence" value="ECO:0000315"/>
    <property type="project" value="MGI"/>
</dbReference>
<dbReference type="GO" id="GO:0010628">
    <property type="term" value="P:positive regulation of gene expression"/>
    <property type="evidence" value="ECO:0000315"/>
    <property type="project" value="BHF-UCL"/>
</dbReference>
<dbReference type="GO" id="GO:0031054">
    <property type="term" value="P:pre-miRNA processing"/>
    <property type="evidence" value="ECO:0000314"/>
    <property type="project" value="MGI"/>
</dbReference>
<dbReference type="GO" id="GO:0031053">
    <property type="term" value="P:primary miRNA processing"/>
    <property type="evidence" value="ECO:0000266"/>
    <property type="project" value="ComplexPortal"/>
</dbReference>
<dbReference type="GO" id="GO:0010468">
    <property type="term" value="P:regulation of gene expression"/>
    <property type="evidence" value="ECO:0000315"/>
    <property type="project" value="MGI"/>
</dbReference>
<dbReference type="GO" id="GO:0050727">
    <property type="term" value="P:regulation of inflammatory response"/>
    <property type="evidence" value="ECO:0000315"/>
    <property type="project" value="MGI"/>
</dbReference>
<dbReference type="GO" id="GO:2000628">
    <property type="term" value="P:regulation of miRNA metabolic process"/>
    <property type="evidence" value="ECO:0000315"/>
    <property type="project" value="MGI"/>
</dbReference>
<dbReference type="GO" id="GO:0045589">
    <property type="term" value="P:regulation of regulatory T cell differentiation"/>
    <property type="evidence" value="ECO:0000315"/>
    <property type="project" value="MGI"/>
</dbReference>
<dbReference type="GO" id="GO:0006364">
    <property type="term" value="P:rRNA processing"/>
    <property type="evidence" value="ECO:0007669"/>
    <property type="project" value="InterPro"/>
</dbReference>
<dbReference type="CDD" id="cd19877">
    <property type="entry name" value="DSRM_RNAse_III_meta_like"/>
    <property type="match status" value="1"/>
</dbReference>
<dbReference type="CDD" id="cd00593">
    <property type="entry name" value="RIBOc"/>
    <property type="match status" value="2"/>
</dbReference>
<dbReference type="FunFam" id="1.10.1520.10:FF:000002">
    <property type="entry name" value="Drosha ribonuclease III"/>
    <property type="match status" value="1"/>
</dbReference>
<dbReference type="FunFam" id="1.10.1520.10:FF:000003">
    <property type="entry name" value="Drosha ribonuclease III"/>
    <property type="match status" value="1"/>
</dbReference>
<dbReference type="FunFam" id="3.30.160.20:FF:000012">
    <property type="entry name" value="Drosha ribonuclease III"/>
    <property type="match status" value="1"/>
</dbReference>
<dbReference type="Gene3D" id="3.30.160.20">
    <property type="match status" value="1"/>
</dbReference>
<dbReference type="Gene3D" id="1.10.1520.10">
    <property type="entry name" value="Ribonuclease III domain"/>
    <property type="match status" value="2"/>
</dbReference>
<dbReference type="HAMAP" id="MF_00104">
    <property type="entry name" value="RNase_III"/>
    <property type="match status" value="1"/>
</dbReference>
<dbReference type="InterPro" id="IPR014720">
    <property type="entry name" value="dsRBD_dom"/>
</dbReference>
<dbReference type="InterPro" id="IPR011907">
    <property type="entry name" value="RNase_III"/>
</dbReference>
<dbReference type="InterPro" id="IPR000999">
    <property type="entry name" value="RNase_III_dom"/>
</dbReference>
<dbReference type="InterPro" id="IPR044442">
    <property type="entry name" value="RNAse_III_DSRM__animal"/>
</dbReference>
<dbReference type="InterPro" id="IPR036389">
    <property type="entry name" value="RNase_III_sf"/>
</dbReference>
<dbReference type="PANTHER" id="PTHR11207:SF0">
    <property type="entry name" value="RIBONUCLEASE 3"/>
    <property type="match status" value="1"/>
</dbReference>
<dbReference type="PANTHER" id="PTHR11207">
    <property type="entry name" value="RIBONUCLEASE III"/>
    <property type="match status" value="1"/>
</dbReference>
<dbReference type="Pfam" id="PF00035">
    <property type="entry name" value="dsrm"/>
    <property type="match status" value="1"/>
</dbReference>
<dbReference type="Pfam" id="PF14622">
    <property type="entry name" value="Ribonucleas_3_3"/>
    <property type="match status" value="1"/>
</dbReference>
<dbReference type="Pfam" id="PF00636">
    <property type="entry name" value="Ribonuclease_3"/>
    <property type="match status" value="1"/>
</dbReference>
<dbReference type="SMART" id="SM00358">
    <property type="entry name" value="DSRM"/>
    <property type="match status" value="1"/>
</dbReference>
<dbReference type="SMART" id="SM00535">
    <property type="entry name" value="RIBOc"/>
    <property type="match status" value="2"/>
</dbReference>
<dbReference type="SUPFAM" id="SSF54768">
    <property type="entry name" value="dsRNA-binding domain-like"/>
    <property type="match status" value="1"/>
</dbReference>
<dbReference type="SUPFAM" id="SSF69065">
    <property type="entry name" value="RNase III domain-like"/>
    <property type="match status" value="2"/>
</dbReference>
<dbReference type="PROSITE" id="PS50137">
    <property type="entry name" value="DS_RBD"/>
    <property type="match status" value="1"/>
</dbReference>
<dbReference type="PROSITE" id="PS00517">
    <property type="entry name" value="RNASE_3_1"/>
    <property type="match status" value="2"/>
</dbReference>
<dbReference type="PROSITE" id="PS50142">
    <property type="entry name" value="RNASE_3_2"/>
    <property type="match status" value="2"/>
</dbReference>
<gene>
    <name type="primary">Drosha</name>
    <name type="synonym">Etohi2</name>
    <name type="synonym">Rn3</name>
    <name type="synonym">Rnasen</name>
</gene>
<keyword id="KW-0963">Cytoplasm</keyword>
<keyword id="KW-0255">Endonuclease</keyword>
<keyword id="KW-0378">Hydrolase</keyword>
<keyword id="KW-0460">Magnesium</keyword>
<keyword id="KW-0464">Manganese</keyword>
<keyword id="KW-0479">Metal-binding</keyword>
<keyword id="KW-0540">Nuclease</keyword>
<keyword id="KW-0539">Nucleus</keyword>
<keyword id="KW-0597">Phosphoprotein</keyword>
<keyword id="KW-1185">Reference proteome</keyword>
<keyword id="KW-0677">Repeat</keyword>
<keyword id="KW-0690">Ribosome biogenesis</keyword>
<keyword id="KW-0694">RNA-binding</keyword>
<keyword id="KW-0862">Zinc</keyword>
<accession>Q5HZJ0</accession>
<comment type="function">
    <text evidence="3 6 7">Ribonuclease III double-stranded (ds) RNA-specific endoribonuclease that is involved in the initial step of microRNA (miRNA) biogenesis. Component of the microprocessor complex that is required to process primary miRNA transcripts (pri-miRNAs) to release precursor miRNA (pre-miRNA) in the nucleus. Within the microprocessor complex, DROSHA cleaves the 3' and 5' strands of a stem-loop in pri-miRNAs (processing center 11 bp from the dsRNA-ssRNA junction) to release hairpin-shaped pre-miRNAs that are subsequently cut by the cytoplasmic DICER to generate mature miRNAs (PubMed:26255770). Involved also in pre-rRNA processing. Cleaves double-strand RNA and does not cleave single-strand RNA. Involved in the formation of GW bodies. Plays a role in growth homeostasis in response to autophagy in motor neurons (PubMed:29784949).</text>
</comment>
<comment type="catalytic activity">
    <reaction evidence="3">
        <text>Endonucleolytic cleavage to 5'-phosphomonoester.</text>
        <dbReference type="EC" id="3.1.26.3"/>
    </reaction>
</comment>
<comment type="cofactor">
    <cofactor evidence="3">
        <name>Mg(2+)</name>
        <dbReference type="ChEBI" id="CHEBI:18420"/>
    </cofactor>
    <cofactor evidence="3">
        <name>Mn(2+)</name>
        <dbReference type="ChEBI" id="CHEBI:29035"/>
    </cofactor>
    <text evidence="3">Each RNase III domain binds at least one Mg(2+) or Mn(2+) ion.</text>
</comment>
<comment type="subunit">
    <text evidence="3 5 6">Component of the microprocessor complex, or pri-miRNA processing protein complex, which is composed of DROSHA and DGCR8 (By similarity). The microprocessor complex is a heterotrimer; each of the two DROSHA RNase III domains binds one DGCR8 (via C-terminal region) (By similarity). Interacts with SP1 and SNIP1 (By similarity). Interacts with SRRT/ARS2 (PubMed:19632182). Interacts with CPSF3 and ISY1; this interaction is in an RNA dependent manner (PubMed:26255770). Interacts with PUS10; interaction promotes pri-miRNAs processing (By similarity).</text>
</comment>
<comment type="subcellular location">
    <subcellularLocation>
        <location evidence="7">Nucleus</location>
    </subcellularLocation>
    <subcellularLocation>
        <location evidence="3">Nucleus</location>
        <location evidence="3">Nucleolus</location>
    </subcellularLocation>
    <subcellularLocation>
        <location evidence="7">Cytoplasm</location>
    </subcellularLocation>
    <text evidence="3">A fraction is translocated to the nucleolus during the S phase of the cell cycle. Localized in GW bodies (GWBs), also known as P-bodies.</text>
</comment>
<comment type="tissue specificity">
    <text evidence="7">Expressed in motor neurons (at protein level).</text>
</comment>
<comment type="domain">
    <text evidence="3">The 2 RNase III domains form an intramolecular dimer where the domain 1 cuts the 3'strand while the domain 2 cleaves the 5'strand of pri-miRNAs, independently of each other.</text>
</comment>
<comment type="PTM">
    <text evidence="7">Degraded by autophagy in response to neuronal activity in motor neurons.</text>
</comment>
<comment type="similarity">
    <text evidence="8">Belongs to the ribonuclease III family.</text>
</comment>
<proteinExistence type="evidence at protein level"/>